<evidence type="ECO:0000255" key="1">
    <source>
        <dbReference type="HAMAP-Rule" id="MF_01719"/>
    </source>
</evidence>
<evidence type="ECO:0000305" key="2"/>
<dbReference type="EC" id="7.4.2.11" evidence="1"/>
<dbReference type="EMBL" id="BA000030">
    <property type="protein sequence ID" value="BAC74500.1"/>
    <property type="status" value="ALT_INIT"/>
    <property type="molecule type" value="Genomic_DNA"/>
</dbReference>
<dbReference type="RefSeq" id="WP_037646523.1">
    <property type="nucleotide sequence ID" value="NZ_JZJK01000082.1"/>
</dbReference>
<dbReference type="SMR" id="Q827Y0"/>
<dbReference type="GeneID" id="41543857"/>
<dbReference type="KEGG" id="sma:SAVERM_6789"/>
<dbReference type="eggNOG" id="COG1135">
    <property type="taxonomic scope" value="Bacteria"/>
</dbReference>
<dbReference type="HOGENOM" id="CLU_000604_1_3_11"/>
<dbReference type="Proteomes" id="UP000000428">
    <property type="component" value="Chromosome"/>
</dbReference>
<dbReference type="GO" id="GO:0005886">
    <property type="term" value="C:plasma membrane"/>
    <property type="evidence" value="ECO:0007669"/>
    <property type="project" value="UniProtKB-SubCell"/>
</dbReference>
<dbReference type="GO" id="GO:0033232">
    <property type="term" value="F:ABC-type D-methionine transporter activity"/>
    <property type="evidence" value="ECO:0007669"/>
    <property type="project" value="UniProtKB-EC"/>
</dbReference>
<dbReference type="GO" id="GO:0005524">
    <property type="term" value="F:ATP binding"/>
    <property type="evidence" value="ECO:0007669"/>
    <property type="project" value="UniProtKB-KW"/>
</dbReference>
<dbReference type="GO" id="GO:0016887">
    <property type="term" value="F:ATP hydrolysis activity"/>
    <property type="evidence" value="ECO:0007669"/>
    <property type="project" value="InterPro"/>
</dbReference>
<dbReference type="CDD" id="cd03258">
    <property type="entry name" value="ABC_MetN_methionine_transporter"/>
    <property type="match status" value="1"/>
</dbReference>
<dbReference type="FunFam" id="3.40.50.300:FF:000056">
    <property type="entry name" value="Cell division ATP-binding protein FtsE"/>
    <property type="match status" value="1"/>
</dbReference>
<dbReference type="Gene3D" id="3.30.70.260">
    <property type="match status" value="1"/>
</dbReference>
<dbReference type="Gene3D" id="3.40.50.300">
    <property type="entry name" value="P-loop containing nucleotide triphosphate hydrolases"/>
    <property type="match status" value="1"/>
</dbReference>
<dbReference type="InterPro" id="IPR003593">
    <property type="entry name" value="AAA+_ATPase"/>
</dbReference>
<dbReference type="InterPro" id="IPR003439">
    <property type="entry name" value="ABC_transporter-like_ATP-bd"/>
</dbReference>
<dbReference type="InterPro" id="IPR017871">
    <property type="entry name" value="ABC_transporter-like_CS"/>
</dbReference>
<dbReference type="InterPro" id="IPR045865">
    <property type="entry name" value="ACT-like_dom_sf"/>
</dbReference>
<dbReference type="InterPro" id="IPR041701">
    <property type="entry name" value="MetN_ABC"/>
</dbReference>
<dbReference type="InterPro" id="IPR050086">
    <property type="entry name" value="MetN_ABC_transporter-like"/>
</dbReference>
<dbReference type="InterPro" id="IPR018449">
    <property type="entry name" value="NIL_domain"/>
</dbReference>
<dbReference type="InterPro" id="IPR027417">
    <property type="entry name" value="P-loop_NTPase"/>
</dbReference>
<dbReference type="PANTHER" id="PTHR43166">
    <property type="entry name" value="AMINO ACID IMPORT ATP-BINDING PROTEIN"/>
    <property type="match status" value="1"/>
</dbReference>
<dbReference type="PANTHER" id="PTHR43166:SF30">
    <property type="entry name" value="METHIONINE IMPORT ATP-BINDING PROTEIN METN"/>
    <property type="match status" value="1"/>
</dbReference>
<dbReference type="Pfam" id="PF00005">
    <property type="entry name" value="ABC_tran"/>
    <property type="match status" value="1"/>
</dbReference>
<dbReference type="Pfam" id="PF09383">
    <property type="entry name" value="NIL"/>
    <property type="match status" value="1"/>
</dbReference>
<dbReference type="SMART" id="SM00382">
    <property type="entry name" value="AAA"/>
    <property type="match status" value="1"/>
</dbReference>
<dbReference type="SMART" id="SM00930">
    <property type="entry name" value="NIL"/>
    <property type="match status" value="1"/>
</dbReference>
<dbReference type="SUPFAM" id="SSF55021">
    <property type="entry name" value="ACT-like"/>
    <property type="match status" value="1"/>
</dbReference>
<dbReference type="SUPFAM" id="SSF52540">
    <property type="entry name" value="P-loop containing nucleoside triphosphate hydrolases"/>
    <property type="match status" value="1"/>
</dbReference>
<dbReference type="PROSITE" id="PS00211">
    <property type="entry name" value="ABC_TRANSPORTER_1"/>
    <property type="match status" value="1"/>
</dbReference>
<dbReference type="PROSITE" id="PS50893">
    <property type="entry name" value="ABC_TRANSPORTER_2"/>
    <property type="match status" value="1"/>
</dbReference>
<dbReference type="PROSITE" id="PS51264">
    <property type="entry name" value="METN"/>
    <property type="match status" value="1"/>
</dbReference>
<sequence>MITTTGLTKVYRSRGREVTALDGVDLHVREGEVYGVIGQSGAGKSSLIRCVNLLERPTSGTVTVAGQDLTALAGRGPRAGKELRTARSHIGMVFQHFNLLSSRTVQDNVELPLEILGVSGRERGRKALELLDLVGLTDKAKAYPAQLSGGQKQRVGIARALAGDPKVLLSDEATSALDPETTRSILQLLRDLNRQLGLTVLLITHEMNVVKSICDSAALMEKGRIVESGTVSELLGTPGSELASALFPVTGDASGDDRTVVDVTFHGEAATQPVISQLSRTYNIDISILGAAIDTVGGLQVGRMRIELPGRYEDNVVPIGFLREQGLQIDVVDKSDQESVLVKEGAK</sequence>
<accession>Q827Y0</accession>
<keyword id="KW-0029">Amino-acid transport</keyword>
<keyword id="KW-0067">ATP-binding</keyword>
<keyword id="KW-1003">Cell membrane</keyword>
<keyword id="KW-0472">Membrane</keyword>
<keyword id="KW-0547">Nucleotide-binding</keyword>
<keyword id="KW-1185">Reference proteome</keyword>
<keyword id="KW-1278">Translocase</keyword>
<keyword id="KW-0813">Transport</keyword>
<name>METN_STRAW</name>
<comment type="function">
    <text evidence="1">Part of the ABC transporter complex MetNIQ involved in methionine import. Responsible for energy coupling to the transport system.</text>
</comment>
<comment type="catalytic activity">
    <reaction evidence="1">
        <text>L-methionine(out) + ATP + H2O = L-methionine(in) + ADP + phosphate + H(+)</text>
        <dbReference type="Rhea" id="RHEA:29779"/>
        <dbReference type="ChEBI" id="CHEBI:15377"/>
        <dbReference type="ChEBI" id="CHEBI:15378"/>
        <dbReference type="ChEBI" id="CHEBI:30616"/>
        <dbReference type="ChEBI" id="CHEBI:43474"/>
        <dbReference type="ChEBI" id="CHEBI:57844"/>
        <dbReference type="ChEBI" id="CHEBI:456216"/>
        <dbReference type="EC" id="7.4.2.11"/>
    </reaction>
</comment>
<comment type="catalytic activity">
    <reaction evidence="1">
        <text>D-methionine(out) + ATP + H2O = D-methionine(in) + ADP + phosphate + H(+)</text>
        <dbReference type="Rhea" id="RHEA:29767"/>
        <dbReference type="ChEBI" id="CHEBI:15377"/>
        <dbReference type="ChEBI" id="CHEBI:15378"/>
        <dbReference type="ChEBI" id="CHEBI:30616"/>
        <dbReference type="ChEBI" id="CHEBI:43474"/>
        <dbReference type="ChEBI" id="CHEBI:57932"/>
        <dbReference type="ChEBI" id="CHEBI:456216"/>
        <dbReference type="EC" id="7.4.2.11"/>
    </reaction>
</comment>
<comment type="subunit">
    <text evidence="1">The complex is composed of two ATP-binding proteins (MetN), two transmembrane proteins (MetI) and a solute-binding protein (MetQ).</text>
</comment>
<comment type="subcellular location">
    <subcellularLocation>
        <location evidence="1">Cell membrane</location>
        <topology evidence="1">Peripheral membrane protein</topology>
    </subcellularLocation>
</comment>
<comment type="similarity">
    <text evidence="1">Belongs to the ABC transporter superfamily. Methionine importer (TC 3.A.1.24) family.</text>
</comment>
<comment type="sequence caution" evidence="2">
    <conflict type="erroneous initiation">
        <sequence resource="EMBL-CDS" id="BAC74500"/>
    </conflict>
</comment>
<reference key="1">
    <citation type="journal article" date="2001" name="Proc. Natl. Acad. Sci. U.S.A.">
        <title>Genome sequence of an industrial microorganism Streptomyces avermitilis: deducing the ability of producing secondary metabolites.</title>
        <authorList>
            <person name="Omura S."/>
            <person name="Ikeda H."/>
            <person name="Ishikawa J."/>
            <person name="Hanamoto A."/>
            <person name="Takahashi C."/>
            <person name="Shinose M."/>
            <person name="Takahashi Y."/>
            <person name="Horikawa H."/>
            <person name="Nakazawa H."/>
            <person name="Osonoe T."/>
            <person name="Kikuchi H."/>
            <person name="Shiba T."/>
            <person name="Sakaki Y."/>
            <person name="Hattori M."/>
        </authorList>
    </citation>
    <scope>NUCLEOTIDE SEQUENCE [LARGE SCALE GENOMIC DNA]</scope>
    <source>
        <strain>ATCC 31267 / DSM 46492 / JCM 5070 / NBRC 14893 / NCIMB 12804 / NRRL 8165 / MA-4680</strain>
    </source>
</reference>
<reference key="2">
    <citation type="journal article" date="2003" name="Nat. Biotechnol.">
        <title>Complete genome sequence and comparative analysis of the industrial microorganism Streptomyces avermitilis.</title>
        <authorList>
            <person name="Ikeda H."/>
            <person name="Ishikawa J."/>
            <person name="Hanamoto A."/>
            <person name="Shinose M."/>
            <person name="Kikuchi H."/>
            <person name="Shiba T."/>
            <person name="Sakaki Y."/>
            <person name="Hattori M."/>
            <person name="Omura S."/>
        </authorList>
    </citation>
    <scope>NUCLEOTIDE SEQUENCE [LARGE SCALE GENOMIC DNA]</scope>
    <source>
        <strain>ATCC 31267 / DSM 46492 / JCM 5070 / NBRC 14893 / NCIMB 12804 / NRRL 8165 / MA-4680</strain>
    </source>
</reference>
<gene>
    <name evidence="1" type="primary">metN</name>
    <name type="ordered locus">SAV_6789</name>
</gene>
<protein>
    <recommendedName>
        <fullName evidence="1">Methionine import ATP-binding protein MetN</fullName>
        <ecNumber evidence="1">7.4.2.11</ecNumber>
    </recommendedName>
</protein>
<feature type="chain" id="PRO_0000270428" description="Methionine import ATP-binding protein MetN">
    <location>
        <begin position="1"/>
        <end position="347"/>
    </location>
</feature>
<feature type="domain" description="ABC transporter" evidence="1">
    <location>
        <begin position="2"/>
        <end position="247"/>
    </location>
</feature>
<feature type="binding site" evidence="1">
    <location>
        <begin position="38"/>
        <end position="45"/>
    </location>
    <ligand>
        <name>ATP</name>
        <dbReference type="ChEBI" id="CHEBI:30616"/>
    </ligand>
</feature>
<proteinExistence type="inferred from homology"/>
<organism>
    <name type="scientific">Streptomyces avermitilis (strain ATCC 31267 / DSM 46492 / JCM 5070 / NBRC 14893 / NCIMB 12804 / NRRL 8165 / MA-4680)</name>
    <dbReference type="NCBI Taxonomy" id="227882"/>
    <lineage>
        <taxon>Bacteria</taxon>
        <taxon>Bacillati</taxon>
        <taxon>Actinomycetota</taxon>
        <taxon>Actinomycetes</taxon>
        <taxon>Kitasatosporales</taxon>
        <taxon>Streptomycetaceae</taxon>
        <taxon>Streptomyces</taxon>
    </lineage>
</organism>